<accession>Q9AJD6</accession>
<protein>
    <recommendedName>
        <fullName>Pyridoxine 4-oxidase</fullName>
        <ecNumber>1.1.3.12</ecNumber>
    </recommendedName>
</protein>
<proteinExistence type="evidence at protein level"/>
<gene>
    <name type="primary">pno</name>
</gene>
<dbReference type="EC" id="1.1.3.12"/>
<dbReference type="EMBL" id="AB049341">
    <property type="protein sequence ID" value="BAB39853.1"/>
    <property type="molecule type" value="Genomic_DNA"/>
</dbReference>
<dbReference type="PIR" id="JC7855">
    <property type="entry name" value="JC7855"/>
</dbReference>
<dbReference type="SMR" id="Q9AJD6"/>
<dbReference type="BRENDA" id="1.1.3.12">
    <property type="organism ID" value="7273"/>
</dbReference>
<dbReference type="UniPathway" id="UPA00192">
    <property type="reaction ID" value="UER00590"/>
</dbReference>
<dbReference type="GO" id="GO:0050660">
    <property type="term" value="F:flavin adenine dinucleotide binding"/>
    <property type="evidence" value="ECO:0007669"/>
    <property type="project" value="InterPro"/>
</dbReference>
<dbReference type="GO" id="GO:0050237">
    <property type="term" value="F:pyridoxine 4-oxidase activity"/>
    <property type="evidence" value="ECO:0007669"/>
    <property type="project" value="UniProtKB-EC"/>
</dbReference>
<dbReference type="GO" id="GO:0042820">
    <property type="term" value="P:vitamin B6 catabolic process"/>
    <property type="evidence" value="ECO:0007669"/>
    <property type="project" value="UniProtKB-UniPathway"/>
</dbReference>
<dbReference type="Gene3D" id="3.50.50.60">
    <property type="entry name" value="FAD/NAD(P)-binding domain"/>
    <property type="match status" value="1"/>
</dbReference>
<dbReference type="Gene3D" id="3.30.560.10">
    <property type="entry name" value="Glucose Oxidase, domain 3"/>
    <property type="match status" value="1"/>
</dbReference>
<dbReference type="InterPro" id="IPR036188">
    <property type="entry name" value="FAD/NAD-bd_sf"/>
</dbReference>
<dbReference type="InterPro" id="IPR012132">
    <property type="entry name" value="GMC_OxRdtase"/>
</dbReference>
<dbReference type="InterPro" id="IPR000172">
    <property type="entry name" value="GMC_OxRdtase_N"/>
</dbReference>
<dbReference type="InterPro" id="IPR007867">
    <property type="entry name" value="GMC_OxRtase_C"/>
</dbReference>
<dbReference type="PANTHER" id="PTHR11552:SF147">
    <property type="entry name" value="CHOLINE DEHYDROGENASE, MITOCHONDRIAL"/>
    <property type="match status" value="1"/>
</dbReference>
<dbReference type="PANTHER" id="PTHR11552">
    <property type="entry name" value="GLUCOSE-METHANOL-CHOLINE GMC OXIDOREDUCTASE"/>
    <property type="match status" value="1"/>
</dbReference>
<dbReference type="Pfam" id="PF05199">
    <property type="entry name" value="GMC_oxred_C"/>
    <property type="match status" value="1"/>
</dbReference>
<dbReference type="Pfam" id="PF00732">
    <property type="entry name" value="GMC_oxred_N"/>
    <property type="match status" value="1"/>
</dbReference>
<dbReference type="PIRSF" id="PIRSF000137">
    <property type="entry name" value="Alcohol_oxidase"/>
    <property type="match status" value="1"/>
</dbReference>
<dbReference type="SUPFAM" id="SSF54373">
    <property type="entry name" value="FAD-linked reductases, C-terminal domain"/>
    <property type="match status" value="1"/>
</dbReference>
<dbReference type="SUPFAM" id="SSF51905">
    <property type="entry name" value="FAD/NAD(P)-binding domain"/>
    <property type="match status" value="1"/>
</dbReference>
<dbReference type="PROSITE" id="PS00623">
    <property type="entry name" value="GMC_OXRED_1"/>
    <property type="match status" value="1"/>
</dbReference>
<dbReference type="PROSITE" id="PS00624">
    <property type="entry name" value="GMC_OXRED_2"/>
    <property type="match status" value="1"/>
</dbReference>
<comment type="catalytic activity">
    <reaction>
        <text>pyridoxine + O2 = pyridoxal + H2O2</text>
        <dbReference type="Rhea" id="RHEA:15033"/>
        <dbReference type="ChEBI" id="CHEBI:15379"/>
        <dbReference type="ChEBI" id="CHEBI:16240"/>
        <dbReference type="ChEBI" id="CHEBI:16709"/>
        <dbReference type="ChEBI" id="CHEBI:17310"/>
        <dbReference type="EC" id="1.1.3.12"/>
    </reaction>
</comment>
<comment type="cofactor">
    <cofactor>
        <name>FAD</name>
        <dbReference type="ChEBI" id="CHEBI:57692"/>
    </cofactor>
</comment>
<comment type="biophysicochemical properties">
    <kinetics>
        <KM evidence="2">54.5 uM for pyridoxine</KM>
        <KM evidence="2">206.64 uM for oxygen</KM>
        <KM evidence="2">9.71 uM for 2,6-dichloroindophenol</KM>
        <KM evidence="2">50.16 uM for vitamin K3</KM>
    </kinetics>
    <phDependence>
        <text evidence="2">Optimum pH is 7.5-8.0.</text>
    </phDependence>
    <temperatureDependence>
        <text evidence="2">Optimum temperature is 40 degrees Celsius.</text>
    </temperatureDependence>
</comment>
<comment type="pathway">
    <text>Cofactor degradation; B6 vitamer degradation; pyridoxal from pyridoxine (oxidase route): step 1/1.</text>
</comment>
<comment type="subunit">
    <text>Monomer.</text>
</comment>
<comment type="similarity">
    <text evidence="3">Belongs to the GMC oxidoreductase family.</text>
</comment>
<feature type="initiator methionine" description="Removed" evidence="2">
    <location>
        <position position="1"/>
    </location>
</feature>
<feature type="chain" id="PRO_0000205614" description="Pyridoxine 4-oxidase">
    <location>
        <begin position="2"/>
        <end position="507"/>
    </location>
</feature>
<feature type="active site" description="Proton acceptor" evidence="1">
    <location>
        <position position="448"/>
    </location>
</feature>
<evidence type="ECO:0000250" key="1">
    <source>
        <dbReference type="UniProtKB" id="E4QP00"/>
    </source>
</evidence>
<evidence type="ECO:0000269" key="2">
    <source>
    </source>
</evidence>
<evidence type="ECO:0000305" key="3"/>
<name>PNO_MICLT</name>
<sequence length="507" mass="54196">MAQYDVAIIGAGSAGALIAARLSEDPARNVLLIEAGGRPSDPDILKPSMWPAIQHRSYDWDYKTTPQEGAAGRSFAWARGKGLGGSSLLHAMGYMRGHPADFAAWAEATGDERWSWEGLLPSFMANEDHVSGGDGIHGKDGPMPVWIPDDEVSPLTQAFMTAGNALGLPRIPDHNTGQMIGVTPNSLMIRDGRRVTVAEAWLTPEVCARPNLTIMTGTLTRRLKLEKSHVSAIELAGPEGLATVTASEIILSAGSLESPALLMRSGIGRENVLREAGVTCRVKAPELGLNLMDHLLGAGNLYATKKHLPPSRLQHSESMAYMRAGDFSAGGQPEIVVGCGVAPIVSESFTAPAPGNAYSFLFGVTHPTSRGEIRITGDAPDSPLIIDPRYLQTQNDRNLFRAALGAAREIGHRPELAEWRDHEILPKSLAASQDIDTFIAKAVITHHHPSGTCRMGKDEMSVVDADLRLRGLDNLYVVDGSVLPSLTAGPIHAAVQAIAENFTTGFK</sequence>
<keyword id="KW-0903">Direct protein sequencing</keyword>
<keyword id="KW-0274">FAD</keyword>
<keyword id="KW-0285">Flavoprotein</keyword>
<keyword id="KW-0560">Oxidoreductase</keyword>
<reference key="1">
    <citation type="journal article" date="2002" name="Biosci. Biotechnol. Biochem.">
        <title>Purification, molecular cloning, and characterization of pyridoxine 4-oxidase from Microbacterium.</title>
        <authorList>
            <person name="Kaneda Y."/>
            <person name="Ohnishi K."/>
            <person name="Yagi T."/>
        </authorList>
    </citation>
    <scope>NUCLEOTIDE SEQUENCE [GENOMIC DNA]</scope>
    <scope>PROTEIN SEQUENCE OF 2-20 AND 348-364</scope>
    <scope>CHARACTERIZATION</scope>
    <scope>BIOPHYSICOCHEMICAL PROPERTIES</scope>
    <source>
        <strain>YK-1</strain>
    </source>
</reference>
<organism>
    <name type="scientific">Microbacterium luteolum</name>
    <name type="common">Aureobacterium luteolum</name>
    <dbReference type="NCBI Taxonomy" id="69367"/>
    <lineage>
        <taxon>Bacteria</taxon>
        <taxon>Bacillati</taxon>
        <taxon>Actinomycetota</taxon>
        <taxon>Actinomycetes</taxon>
        <taxon>Micrococcales</taxon>
        <taxon>Microbacteriaceae</taxon>
        <taxon>Microbacterium</taxon>
    </lineage>
</organism>